<accession>A3MSN3</accession>
<proteinExistence type="inferred from homology"/>
<keyword id="KW-0963">Cytoplasm</keyword>
<keyword id="KW-0251">Elongation factor</keyword>
<keyword id="KW-0342">GTP-binding</keyword>
<keyword id="KW-0547">Nucleotide-binding</keyword>
<keyword id="KW-0648">Protein biosynthesis</keyword>
<dbReference type="EMBL" id="CP000561">
    <property type="protein sequence ID" value="ABO07650.1"/>
    <property type="molecule type" value="Genomic_DNA"/>
</dbReference>
<dbReference type="RefSeq" id="WP_011848907.1">
    <property type="nucleotide sequence ID" value="NC_009073.1"/>
</dbReference>
<dbReference type="SMR" id="A3MSN3"/>
<dbReference type="STRING" id="410359.Pcal_0213"/>
<dbReference type="GeneID" id="4909387"/>
<dbReference type="KEGG" id="pcl:Pcal_0213"/>
<dbReference type="eggNOG" id="arCOG01559">
    <property type="taxonomic scope" value="Archaea"/>
</dbReference>
<dbReference type="HOGENOM" id="CLU_002794_11_1_2"/>
<dbReference type="OrthoDB" id="6290at2157"/>
<dbReference type="Proteomes" id="UP000001431">
    <property type="component" value="Chromosome"/>
</dbReference>
<dbReference type="GO" id="GO:0005829">
    <property type="term" value="C:cytosol"/>
    <property type="evidence" value="ECO:0007669"/>
    <property type="project" value="TreeGrafter"/>
</dbReference>
<dbReference type="GO" id="GO:1990904">
    <property type="term" value="C:ribonucleoprotein complex"/>
    <property type="evidence" value="ECO:0007669"/>
    <property type="project" value="TreeGrafter"/>
</dbReference>
<dbReference type="GO" id="GO:0005525">
    <property type="term" value="F:GTP binding"/>
    <property type="evidence" value="ECO:0007669"/>
    <property type="project" value="UniProtKB-UniRule"/>
</dbReference>
<dbReference type="GO" id="GO:0003924">
    <property type="term" value="F:GTPase activity"/>
    <property type="evidence" value="ECO:0007669"/>
    <property type="project" value="InterPro"/>
</dbReference>
<dbReference type="GO" id="GO:0003746">
    <property type="term" value="F:translation elongation factor activity"/>
    <property type="evidence" value="ECO:0007669"/>
    <property type="project" value="UniProtKB-UniRule"/>
</dbReference>
<dbReference type="CDD" id="cd01681">
    <property type="entry name" value="aeEF2_snRNP_like_IV"/>
    <property type="match status" value="1"/>
</dbReference>
<dbReference type="CDD" id="cd01885">
    <property type="entry name" value="EF2"/>
    <property type="match status" value="1"/>
</dbReference>
<dbReference type="CDD" id="cd16268">
    <property type="entry name" value="EF2_II"/>
    <property type="match status" value="1"/>
</dbReference>
<dbReference type="CDD" id="cd16261">
    <property type="entry name" value="EF2_snRNP_III"/>
    <property type="match status" value="1"/>
</dbReference>
<dbReference type="CDD" id="cd01514">
    <property type="entry name" value="Elongation_Factor_C"/>
    <property type="match status" value="1"/>
</dbReference>
<dbReference type="FunFam" id="3.30.230.10:FF:000009">
    <property type="entry name" value="116 kDa U5 small nuclear ribonucleoprotein component"/>
    <property type="match status" value="1"/>
</dbReference>
<dbReference type="FunFam" id="3.30.70.240:FF:000010">
    <property type="entry name" value="Elongation factor 2"/>
    <property type="match status" value="1"/>
</dbReference>
<dbReference type="FunFam" id="3.30.70.870:FF:000002">
    <property type="entry name" value="Translation elongation factor 2"/>
    <property type="match status" value="1"/>
</dbReference>
<dbReference type="Gene3D" id="3.30.230.10">
    <property type="match status" value="1"/>
</dbReference>
<dbReference type="Gene3D" id="3.30.70.240">
    <property type="match status" value="1"/>
</dbReference>
<dbReference type="Gene3D" id="3.30.70.870">
    <property type="entry name" value="Elongation Factor G (Translational Gtpase), domain 3"/>
    <property type="match status" value="1"/>
</dbReference>
<dbReference type="Gene3D" id="3.40.50.300">
    <property type="entry name" value="P-loop containing nucleotide triphosphate hydrolases"/>
    <property type="match status" value="1"/>
</dbReference>
<dbReference type="Gene3D" id="2.40.30.10">
    <property type="entry name" value="Translation factors"/>
    <property type="match status" value="1"/>
</dbReference>
<dbReference type="HAMAP" id="MF_00054_A">
    <property type="entry name" value="EF_G_EF_2_A"/>
    <property type="match status" value="1"/>
</dbReference>
<dbReference type="InterPro" id="IPR041095">
    <property type="entry name" value="EFG_II"/>
</dbReference>
<dbReference type="InterPro" id="IPR035647">
    <property type="entry name" value="EFG_III/V"/>
</dbReference>
<dbReference type="InterPro" id="IPR000640">
    <property type="entry name" value="EFG_V-like"/>
</dbReference>
<dbReference type="InterPro" id="IPR004161">
    <property type="entry name" value="EFTu-like_2"/>
</dbReference>
<dbReference type="InterPro" id="IPR027417">
    <property type="entry name" value="P-loop_NTPase"/>
</dbReference>
<dbReference type="InterPro" id="IPR020568">
    <property type="entry name" value="Ribosomal_Su5_D2-typ_SF"/>
</dbReference>
<dbReference type="InterPro" id="IPR014721">
    <property type="entry name" value="Ribsml_uS5_D2-typ_fold_subgr"/>
</dbReference>
<dbReference type="InterPro" id="IPR005225">
    <property type="entry name" value="Small_GTP-bd"/>
</dbReference>
<dbReference type="InterPro" id="IPR000795">
    <property type="entry name" value="T_Tr_GTP-bd_dom"/>
</dbReference>
<dbReference type="InterPro" id="IPR009000">
    <property type="entry name" value="Transl_B-barrel_sf"/>
</dbReference>
<dbReference type="InterPro" id="IPR004543">
    <property type="entry name" value="Transl_elong_EFG/EF2_arc"/>
</dbReference>
<dbReference type="InterPro" id="IPR005517">
    <property type="entry name" value="Transl_elong_EFG/EF2_IV"/>
</dbReference>
<dbReference type="NCBIfam" id="TIGR00490">
    <property type="entry name" value="aEF-2"/>
    <property type="match status" value="1"/>
</dbReference>
<dbReference type="NCBIfam" id="TIGR00231">
    <property type="entry name" value="small_GTP"/>
    <property type="match status" value="1"/>
</dbReference>
<dbReference type="PANTHER" id="PTHR42908:SF3">
    <property type="entry name" value="ELONGATION FACTOR-LIKE GTPASE 1"/>
    <property type="match status" value="1"/>
</dbReference>
<dbReference type="PANTHER" id="PTHR42908">
    <property type="entry name" value="TRANSLATION ELONGATION FACTOR-RELATED"/>
    <property type="match status" value="1"/>
</dbReference>
<dbReference type="Pfam" id="PF00679">
    <property type="entry name" value="EFG_C"/>
    <property type="match status" value="1"/>
</dbReference>
<dbReference type="Pfam" id="PF14492">
    <property type="entry name" value="EFG_III"/>
    <property type="match status" value="1"/>
</dbReference>
<dbReference type="Pfam" id="PF03764">
    <property type="entry name" value="EFG_IV"/>
    <property type="match status" value="1"/>
</dbReference>
<dbReference type="Pfam" id="PF00009">
    <property type="entry name" value="GTP_EFTU"/>
    <property type="match status" value="1"/>
</dbReference>
<dbReference type="Pfam" id="PF03144">
    <property type="entry name" value="GTP_EFTU_D2"/>
    <property type="match status" value="1"/>
</dbReference>
<dbReference type="PRINTS" id="PR00315">
    <property type="entry name" value="ELONGATNFCT"/>
</dbReference>
<dbReference type="SMART" id="SM00838">
    <property type="entry name" value="EFG_C"/>
    <property type="match status" value="1"/>
</dbReference>
<dbReference type="SMART" id="SM00889">
    <property type="entry name" value="EFG_IV"/>
    <property type="match status" value="1"/>
</dbReference>
<dbReference type="SUPFAM" id="SSF54980">
    <property type="entry name" value="EF-G C-terminal domain-like"/>
    <property type="match status" value="2"/>
</dbReference>
<dbReference type="SUPFAM" id="SSF52540">
    <property type="entry name" value="P-loop containing nucleoside triphosphate hydrolases"/>
    <property type="match status" value="1"/>
</dbReference>
<dbReference type="SUPFAM" id="SSF54211">
    <property type="entry name" value="Ribosomal protein S5 domain 2-like"/>
    <property type="match status" value="1"/>
</dbReference>
<dbReference type="SUPFAM" id="SSF50447">
    <property type="entry name" value="Translation proteins"/>
    <property type="match status" value="1"/>
</dbReference>
<dbReference type="PROSITE" id="PS51722">
    <property type="entry name" value="G_TR_2"/>
    <property type="match status" value="1"/>
</dbReference>
<evidence type="ECO:0000255" key="1">
    <source>
        <dbReference type="HAMAP-Rule" id="MF_00054"/>
    </source>
</evidence>
<protein>
    <recommendedName>
        <fullName evidence="1">Elongation factor 2</fullName>
        <shortName evidence="1">EF-2</shortName>
    </recommendedName>
</protein>
<name>EF2_PYRCJ</name>
<feature type="chain" id="PRO_0000335860" description="Elongation factor 2">
    <location>
        <begin position="1"/>
        <end position="740"/>
    </location>
</feature>
<feature type="domain" description="tr-type G">
    <location>
        <begin position="23"/>
        <end position="264"/>
    </location>
</feature>
<feature type="binding site" evidence="1">
    <location>
        <begin position="32"/>
        <end position="39"/>
    </location>
    <ligand>
        <name>GTP</name>
        <dbReference type="ChEBI" id="CHEBI:37565"/>
    </ligand>
</feature>
<feature type="binding site" evidence="1">
    <location>
        <begin position="98"/>
        <end position="102"/>
    </location>
    <ligand>
        <name>GTP</name>
        <dbReference type="ChEBI" id="CHEBI:37565"/>
    </ligand>
</feature>
<feature type="binding site" evidence="1">
    <location>
        <begin position="152"/>
        <end position="155"/>
    </location>
    <ligand>
        <name>GTP</name>
        <dbReference type="ChEBI" id="CHEBI:37565"/>
    </ligand>
</feature>
<feature type="modified residue" description="Diphthamide" evidence="1">
    <location>
        <position position="605"/>
    </location>
</feature>
<comment type="function">
    <text evidence="1">Catalyzes the GTP-dependent ribosomal translocation step during translation elongation. During this step, the ribosome changes from the pre-translocational (PRE) to the post-translocational (POST) state as the newly formed A-site-bound peptidyl-tRNA and P-site-bound deacylated tRNA move to the P and E sites, respectively. Catalyzes the coordinated movement of the two tRNA molecules, the mRNA and conformational changes in the ribosome.</text>
</comment>
<comment type="subcellular location">
    <subcellularLocation>
        <location evidence="1">Cytoplasm</location>
    </subcellularLocation>
</comment>
<comment type="similarity">
    <text evidence="1">Belongs to the TRAFAC class translation factor GTPase superfamily. Classic translation factor GTPase family. EF-G/EF-2 subfamily.</text>
</comment>
<organism>
    <name type="scientific">Pyrobaculum calidifontis (strain DSM 21063 / JCM 11548 / VA1)</name>
    <dbReference type="NCBI Taxonomy" id="410359"/>
    <lineage>
        <taxon>Archaea</taxon>
        <taxon>Thermoproteota</taxon>
        <taxon>Thermoprotei</taxon>
        <taxon>Thermoproteales</taxon>
        <taxon>Thermoproteaceae</taxon>
        <taxon>Pyrobaculum</taxon>
    </lineage>
</organism>
<reference key="1">
    <citation type="submission" date="2007-02" db="EMBL/GenBank/DDBJ databases">
        <title>Complete sequence of Pyrobaculum calidifontis JCM 11548.</title>
        <authorList>
            <consortium name="US DOE Joint Genome Institute"/>
            <person name="Copeland A."/>
            <person name="Lucas S."/>
            <person name="Lapidus A."/>
            <person name="Barry K."/>
            <person name="Glavina del Rio T."/>
            <person name="Dalin E."/>
            <person name="Tice H."/>
            <person name="Pitluck S."/>
            <person name="Chain P."/>
            <person name="Malfatti S."/>
            <person name="Shin M."/>
            <person name="Vergez L."/>
            <person name="Schmutz J."/>
            <person name="Larimer F."/>
            <person name="Land M."/>
            <person name="Hauser L."/>
            <person name="Kyrpides N."/>
            <person name="Mikhailova N."/>
            <person name="Cozen A.E."/>
            <person name="Fitz-Gibbon S.T."/>
            <person name="House C.H."/>
            <person name="Saltikov C."/>
            <person name="Lowe T.M."/>
            <person name="Richardson P."/>
        </authorList>
    </citation>
    <scope>NUCLEOTIDE SEQUENCE [LARGE SCALE GENOMIC DNA]</scope>
    <source>
        <strain>DSM 21063 / JCM 11548 / VA1</strain>
    </source>
</reference>
<sequence length="740" mass="83093">MSSAVRIVEKQLDEILAIARNPAQIRNAGTLAHVDHGKTTTTDSLLMGAGLLSPKVAGKALAMDYVPIEQLRQMTVKAANISLYFEYGGKPYLINFVDTPGHVDFTGHVTRSLRVMDGGLVVVDAVEGVMTQTETVVRQALEEYVRPVLFINKIDRLIKELRLSPQEIQQRILSIVKDFNALIDMFAPPEFKDKWKIDPGKGQMAMGSALHKWGITIPMAQKAGIKFSNIVDAYEKGYVDKLAEEFPLYKTLLTMIIEHVPPPNVAQKYRIPRLWRGDLNSEVGKALLEADPNGPTVIAVSKVNKDPHAGLIATGRVFSGTIREGDEIYIIGRKMKKKVLQTYIYMGPTRIIVPYMPAGNIVALMGVDEARAGDTLVTPSLADIPPFERMRYISEPVVTVAIEPKNPAELARLVEALKDLVIEDPTLDLKIDQETGQILLSGVGTLHLEIATWLLKERTKVEFSVSPPLIRFRETVRERSQVWEGKSPNKHNRLYFYVEPLDETTVELIATREITEEQDPRERAKILREKAGWDTDEARGVWAIDDRYFNVIVDKTTGIQYLREIRDYIIQGFRWAMEAGPLAQEPIRGVKVVLVDAVVHEDPAHRGPAQIMPATKNAIFAAFLSARPTILEPLVRLDIKVAPDYIGAVTSVINKHRGKILDMTQQEYMAFLRAELPVLESFTISDELRAAAAGKIFWSMQFSRWAPYPESMLADFVKQLRKKKGLKEEIPKPTDFVEAF</sequence>
<gene>
    <name evidence="1" type="primary">fusA</name>
    <name type="ordered locus">Pcal_0213</name>
</gene>